<accession>Q8R8M3</accession>
<dbReference type="EC" id="3.1.3.71" evidence="1"/>
<dbReference type="EMBL" id="AE008691">
    <property type="protein sequence ID" value="AAM25151.1"/>
    <property type="molecule type" value="Genomic_DNA"/>
</dbReference>
<dbReference type="RefSeq" id="WP_011026107.1">
    <property type="nucleotide sequence ID" value="NC_003869.1"/>
</dbReference>
<dbReference type="SMR" id="Q8R8M3"/>
<dbReference type="STRING" id="273068.TTE1972"/>
<dbReference type="KEGG" id="tte:TTE1972"/>
<dbReference type="eggNOG" id="COG2045">
    <property type="taxonomic scope" value="Bacteria"/>
</dbReference>
<dbReference type="HOGENOM" id="CLU_070028_0_0_9"/>
<dbReference type="OrthoDB" id="4913at2"/>
<dbReference type="Proteomes" id="UP000000555">
    <property type="component" value="Chromosome"/>
</dbReference>
<dbReference type="GO" id="GO:0050532">
    <property type="term" value="F:2-phosphosulfolactate phosphatase activity"/>
    <property type="evidence" value="ECO:0007669"/>
    <property type="project" value="UniProtKB-UniRule"/>
</dbReference>
<dbReference type="GO" id="GO:0000287">
    <property type="term" value="F:magnesium ion binding"/>
    <property type="evidence" value="ECO:0007669"/>
    <property type="project" value="UniProtKB-UniRule"/>
</dbReference>
<dbReference type="GO" id="GO:0050545">
    <property type="term" value="F:sulfopyruvate decarboxylase activity"/>
    <property type="evidence" value="ECO:0007669"/>
    <property type="project" value="TreeGrafter"/>
</dbReference>
<dbReference type="FunFam" id="3.90.1560.10:FF:000001">
    <property type="entry name" value="Probable 2-phosphosulfolactate phosphatase"/>
    <property type="match status" value="1"/>
</dbReference>
<dbReference type="Gene3D" id="3.90.1560.10">
    <property type="entry name" value="ComB-like"/>
    <property type="match status" value="1"/>
</dbReference>
<dbReference type="HAMAP" id="MF_00490">
    <property type="entry name" value="ComB"/>
    <property type="match status" value="1"/>
</dbReference>
<dbReference type="InterPro" id="IPR005238">
    <property type="entry name" value="ComB-like"/>
</dbReference>
<dbReference type="InterPro" id="IPR036702">
    <property type="entry name" value="ComB-like_sf"/>
</dbReference>
<dbReference type="NCBIfam" id="NF002054">
    <property type="entry name" value="PRK00886.1-3"/>
    <property type="match status" value="1"/>
</dbReference>
<dbReference type="PANTHER" id="PTHR37311">
    <property type="entry name" value="2-PHOSPHOSULFOLACTATE PHOSPHATASE-RELATED"/>
    <property type="match status" value="1"/>
</dbReference>
<dbReference type="PANTHER" id="PTHR37311:SF1">
    <property type="entry name" value="2-PHOSPHOSULFOLACTATE PHOSPHATASE-RELATED"/>
    <property type="match status" value="1"/>
</dbReference>
<dbReference type="Pfam" id="PF04029">
    <property type="entry name" value="2-ph_phosp"/>
    <property type="match status" value="1"/>
</dbReference>
<dbReference type="SUPFAM" id="SSF142823">
    <property type="entry name" value="ComB-like"/>
    <property type="match status" value="1"/>
</dbReference>
<evidence type="ECO:0000255" key="1">
    <source>
        <dbReference type="HAMAP-Rule" id="MF_00490"/>
    </source>
</evidence>
<reference key="1">
    <citation type="journal article" date="2002" name="Genome Res.">
        <title>A complete sequence of the T. tengcongensis genome.</title>
        <authorList>
            <person name="Bao Q."/>
            <person name="Tian Y."/>
            <person name="Li W."/>
            <person name="Xu Z."/>
            <person name="Xuan Z."/>
            <person name="Hu S."/>
            <person name="Dong W."/>
            <person name="Yang J."/>
            <person name="Chen Y."/>
            <person name="Xue Y."/>
            <person name="Xu Y."/>
            <person name="Lai X."/>
            <person name="Huang L."/>
            <person name="Dong X."/>
            <person name="Ma Y."/>
            <person name="Ling L."/>
            <person name="Tan H."/>
            <person name="Chen R."/>
            <person name="Wang J."/>
            <person name="Yu J."/>
            <person name="Yang H."/>
        </authorList>
    </citation>
    <scope>NUCLEOTIDE SEQUENCE [LARGE SCALE GENOMIC DNA]</scope>
    <source>
        <strain>DSM 15242 / JCM 11007 / NBRC 100824 / MB4</strain>
    </source>
</reference>
<feature type="chain" id="PRO_0000081479" description="Probable 2-phosphosulfolactate phosphatase">
    <location>
        <begin position="1"/>
        <end position="241"/>
    </location>
</feature>
<organism>
    <name type="scientific">Caldanaerobacter subterraneus subsp. tengcongensis (strain DSM 15242 / JCM 11007 / NBRC 100824 / MB4)</name>
    <name type="common">Thermoanaerobacter tengcongensis</name>
    <dbReference type="NCBI Taxonomy" id="273068"/>
    <lineage>
        <taxon>Bacteria</taxon>
        <taxon>Bacillati</taxon>
        <taxon>Bacillota</taxon>
        <taxon>Clostridia</taxon>
        <taxon>Thermoanaerobacterales</taxon>
        <taxon>Thermoanaerobacteraceae</taxon>
        <taxon>Caldanaerobacter</taxon>
    </lineage>
</organism>
<protein>
    <recommendedName>
        <fullName evidence="1">Probable 2-phosphosulfolactate phosphatase</fullName>
        <ecNumber evidence="1">3.1.3.71</ecNumber>
    </recommendedName>
</protein>
<comment type="catalytic activity">
    <reaction evidence="1">
        <text>(2R)-O-phospho-3-sulfolactate + H2O = (2R)-3-sulfolactate + phosphate</text>
        <dbReference type="Rhea" id="RHEA:23416"/>
        <dbReference type="ChEBI" id="CHEBI:15377"/>
        <dbReference type="ChEBI" id="CHEBI:15597"/>
        <dbReference type="ChEBI" id="CHEBI:43474"/>
        <dbReference type="ChEBI" id="CHEBI:58738"/>
        <dbReference type="EC" id="3.1.3.71"/>
    </reaction>
</comment>
<comment type="cofactor">
    <cofactor evidence="1">
        <name>Mg(2+)</name>
        <dbReference type="ChEBI" id="CHEBI:18420"/>
    </cofactor>
</comment>
<comment type="similarity">
    <text evidence="1">Belongs to the ComB family.</text>
</comment>
<sequence length="241" mass="27221">MFLQTYETYNSINDRDLKEKNVVVIDTLRATSVITTALFNGAKEVIPVSEVEEAIELSKNFDRDTFLLAGERNSQKIEGFDLSNSPLEYVPEKVKGKTIIFTTTNGTRALKKVASAEEVILGCLLNVSAVARYISKSNKDTVIVCAGTEGKFSFDDILTAGAIYEKLKSLTDFESDDLSKASYFLYKPYENNLYDIMKYGYHLRRLEELGYTEDIKFCLTVDKFDIVPKLKNGIVRTSQDF</sequence>
<name>COMB_CALS4</name>
<proteinExistence type="inferred from homology"/>
<keyword id="KW-0378">Hydrolase</keyword>
<keyword id="KW-0460">Magnesium</keyword>
<keyword id="KW-1185">Reference proteome</keyword>
<gene>
    <name evidence="1" type="primary">comB</name>
    <name type="ordered locus">TTE1972</name>
</gene>